<organism>
    <name type="scientific">Azoarcus sp. (strain BH72)</name>
    <dbReference type="NCBI Taxonomy" id="418699"/>
    <lineage>
        <taxon>Bacteria</taxon>
        <taxon>Pseudomonadati</taxon>
        <taxon>Pseudomonadota</taxon>
        <taxon>Betaproteobacteria</taxon>
        <taxon>Rhodocyclales</taxon>
        <taxon>Zoogloeaceae</taxon>
        <taxon>Azoarcus</taxon>
    </lineage>
</organism>
<protein>
    <recommendedName>
        <fullName evidence="1">Acyl carrier protein</fullName>
        <shortName evidence="1">ACP</shortName>
    </recommendedName>
</protein>
<name>ACP_AZOSB</name>
<dbReference type="EMBL" id="AM406670">
    <property type="protein sequence ID" value="CAL94243.1"/>
    <property type="molecule type" value="Genomic_DNA"/>
</dbReference>
<dbReference type="RefSeq" id="WP_011765359.1">
    <property type="nucleotide sequence ID" value="NC_008702.1"/>
</dbReference>
<dbReference type="SMR" id="A1K5Y8"/>
<dbReference type="STRING" id="62928.azo1626"/>
<dbReference type="KEGG" id="aoa:dqs_1751"/>
<dbReference type="KEGG" id="azo:azo1626"/>
<dbReference type="eggNOG" id="COG0236">
    <property type="taxonomic scope" value="Bacteria"/>
</dbReference>
<dbReference type="HOGENOM" id="CLU_108696_5_1_4"/>
<dbReference type="OrthoDB" id="9804551at2"/>
<dbReference type="UniPathway" id="UPA00094"/>
<dbReference type="Proteomes" id="UP000002588">
    <property type="component" value="Chromosome"/>
</dbReference>
<dbReference type="GO" id="GO:0005829">
    <property type="term" value="C:cytosol"/>
    <property type="evidence" value="ECO:0007669"/>
    <property type="project" value="TreeGrafter"/>
</dbReference>
<dbReference type="GO" id="GO:0016020">
    <property type="term" value="C:membrane"/>
    <property type="evidence" value="ECO:0007669"/>
    <property type="project" value="GOC"/>
</dbReference>
<dbReference type="GO" id="GO:0000035">
    <property type="term" value="F:acyl binding"/>
    <property type="evidence" value="ECO:0007669"/>
    <property type="project" value="TreeGrafter"/>
</dbReference>
<dbReference type="GO" id="GO:0000036">
    <property type="term" value="F:acyl carrier activity"/>
    <property type="evidence" value="ECO:0007669"/>
    <property type="project" value="UniProtKB-UniRule"/>
</dbReference>
<dbReference type="GO" id="GO:0009245">
    <property type="term" value="P:lipid A biosynthetic process"/>
    <property type="evidence" value="ECO:0007669"/>
    <property type="project" value="TreeGrafter"/>
</dbReference>
<dbReference type="FunFam" id="1.10.1200.10:FF:000001">
    <property type="entry name" value="Acyl carrier protein"/>
    <property type="match status" value="1"/>
</dbReference>
<dbReference type="Gene3D" id="1.10.1200.10">
    <property type="entry name" value="ACP-like"/>
    <property type="match status" value="1"/>
</dbReference>
<dbReference type="HAMAP" id="MF_01217">
    <property type="entry name" value="Acyl_carrier"/>
    <property type="match status" value="1"/>
</dbReference>
<dbReference type="InterPro" id="IPR003231">
    <property type="entry name" value="ACP"/>
</dbReference>
<dbReference type="InterPro" id="IPR036736">
    <property type="entry name" value="ACP-like_sf"/>
</dbReference>
<dbReference type="InterPro" id="IPR009081">
    <property type="entry name" value="PP-bd_ACP"/>
</dbReference>
<dbReference type="InterPro" id="IPR006162">
    <property type="entry name" value="Ppantetheine_attach_site"/>
</dbReference>
<dbReference type="NCBIfam" id="TIGR00517">
    <property type="entry name" value="acyl_carrier"/>
    <property type="match status" value="1"/>
</dbReference>
<dbReference type="NCBIfam" id="NF002148">
    <property type="entry name" value="PRK00982.1-2"/>
    <property type="match status" value="1"/>
</dbReference>
<dbReference type="NCBIfam" id="NF002149">
    <property type="entry name" value="PRK00982.1-3"/>
    <property type="match status" value="1"/>
</dbReference>
<dbReference type="NCBIfam" id="NF002150">
    <property type="entry name" value="PRK00982.1-4"/>
    <property type="match status" value="1"/>
</dbReference>
<dbReference type="NCBIfam" id="NF002151">
    <property type="entry name" value="PRK00982.1-5"/>
    <property type="match status" value="1"/>
</dbReference>
<dbReference type="PANTHER" id="PTHR20863">
    <property type="entry name" value="ACYL CARRIER PROTEIN"/>
    <property type="match status" value="1"/>
</dbReference>
<dbReference type="PANTHER" id="PTHR20863:SF76">
    <property type="entry name" value="CARRIER DOMAIN-CONTAINING PROTEIN"/>
    <property type="match status" value="1"/>
</dbReference>
<dbReference type="Pfam" id="PF00550">
    <property type="entry name" value="PP-binding"/>
    <property type="match status" value="1"/>
</dbReference>
<dbReference type="SUPFAM" id="SSF47336">
    <property type="entry name" value="ACP-like"/>
    <property type="match status" value="1"/>
</dbReference>
<dbReference type="PROSITE" id="PS50075">
    <property type="entry name" value="CARRIER"/>
    <property type="match status" value="1"/>
</dbReference>
<dbReference type="PROSITE" id="PS00012">
    <property type="entry name" value="PHOSPHOPANTETHEINE"/>
    <property type="match status" value="1"/>
</dbReference>
<keyword id="KW-0963">Cytoplasm</keyword>
<keyword id="KW-0275">Fatty acid biosynthesis</keyword>
<keyword id="KW-0276">Fatty acid metabolism</keyword>
<keyword id="KW-0444">Lipid biosynthesis</keyword>
<keyword id="KW-0443">Lipid metabolism</keyword>
<keyword id="KW-0596">Phosphopantetheine</keyword>
<keyword id="KW-0597">Phosphoprotein</keyword>
<keyword id="KW-1185">Reference proteome</keyword>
<feature type="chain" id="PRO_1000066552" description="Acyl carrier protein">
    <location>
        <begin position="1"/>
        <end position="79"/>
    </location>
</feature>
<feature type="domain" description="Carrier" evidence="2">
    <location>
        <begin position="2"/>
        <end position="77"/>
    </location>
</feature>
<feature type="modified residue" description="O-(pantetheine 4'-phosphoryl)serine" evidence="2">
    <location>
        <position position="37"/>
    </location>
</feature>
<reference key="1">
    <citation type="journal article" date="2006" name="Nat. Biotechnol.">
        <title>Complete genome of the mutualistic, N2-fixing grass endophyte Azoarcus sp. strain BH72.</title>
        <authorList>
            <person name="Krause A."/>
            <person name="Ramakumar A."/>
            <person name="Bartels D."/>
            <person name="Battistoni F."/>
            <person name="Bekel T."/>
            <person name="Boch J."/>
            <person name="Boehm M."/>
            <person name="Friedrich F."/>
            <person name="Hurek T."/>
            <person name="Krause L."/>
            <person name="Linke B."/>
            <person name="McHardy A.C."/>
            <person name="Sarkar A."/>
            <person name="Schneiker S."/>
            <person name="Syed A.A."/>
            <person name="Thauer R."/>
            <person name="Vorhoelter F.-J."/>
            <person name="Weidner S."/>
            <person name="Puehler A."/>
            <person name="Reinhold-Hurek B."/>
            <person name="Kaiser O."/>
            <person name="Goesmann A."/>
        </authorList>
    </citation>
    <scope>NUCLEOTIDE SEQUENCE [LARGE SCALE GENOMIC DNA]</scope>
    <source>
        <strain>BH72</strain>
    </source>
</reference>
<comment type="function">
    <text evidence="1">Carrier of the growing fatty acid chain in fatty acid biosynthesis.</text>
</comment>
<comment type="pathway">
    <text evidence="1">Lipid metabolism; fatty acid biosynthesis.</text>
</comment>
<comment type="subcellular location">
    <subcellularLocation>
        <location evidence="1">Cytoplasm</location>
    </subcellularLocation>
</comment>
<comment type="PTM">
    <text evidence="1">4'-phosphopantetheine is transferred from CoA to a specific serine of apo-ACP by AcpS. This modification is essential for activity because fatty acids are bound in thioester linkage to the sulfhydryl of the prosthetic group.</text>
</comment>
<comment type="similarity">
    <text evidence="1">Belongs to the acyl carrier protein (ACP) family.</text>
</comment>
<accession>A1K5Y8</accession>
<evidence type="ECO:0000255" key="1">
    <source>
        <dbReference type="HAMAP-Rule" id="MF_01217"/>
    </source>
</evidence>
<evidence type="ECO:0000255" key="2">
    <source>
        <dbReference type="PROSITE-ProRule" id="PRU00258"/>
    </source>
</evidence>
<proteinExistence type="inferred from homology"/>
<sequence length="79" mass="8940">MENIEQRVKKIVAEQLGVNESEIKNESSFVDDLGADSLDTVELVMALEEEFECEIPDEEAEKITTVQQAIDYVNAHLKK</sequence>
<gene>
    <name evidence="1" type="primary">acpP</name>
    <name type="ordered locus">azo1626</name>
</gene>